<reference key="1">
    <citation type="journal article" date="2008" name="Infect. Immun.">
        <title>Genome of Mycoplasma arthritidis.</title>
        <authorList>
            <person name="Dybvig K."/>
            <person name="Zuhua C."/>
            <person name="Lao P."/>
            <person name="Jordan D.S."/>
            <person name="French C.T."/>
            <person name="Tu A.H."/>
            <person name="Loraine A.E."/>
        </authorList>
    </citation>
    <scope>NUCLEOTIDE SEQUENCE [LARGE SCALE GENOMIC DNA]</scope>
    <source>
        <strain>158L3-1</strain>
    </source>
</reference>
<dbReference type="EC" id="6.1.1.22" evidence="1"/>
<dbReference type="EMBL" id="CP001047">
    <property type="protein sequence ID" value="ACF07570.1"/>
    <property type="molecule type" value="Genomic_DNA"/>
</dbReference>
<dbReference type="RefSeq" id="WP_012498527.1">
    <property type="nucleotide sequence ID" value="NC_011025.1"/>
</dbReference>
<dbReference type="SMR" id="B3PNG8"/>
<dbReference type="STRING" id="243272.MARTH_orf850"/>
<dbReference type="KEGG" id="mat:MARTH_orf850"/>
<dbReference type="eggNOG" id="COG0017">
    <property type="taxonomic scope" value="Bacteria"/>
</dbReference>
<dbReference type="HOGENOM" id="CLU_004553_2_0_14"/>
<dbReference type="Proteomes" id="UP000008812">
    <property type="component" value="Chromosome"/>
</dbReference>
<dbReference type="GO" id="GO:0005737">
    <property type="term" value="C:cytoplasm"/>
    <property type="evidence" value="ECO:0007669"/>
    <property type="project" value="UniProtKB-SubCell"/>
</dbReference>
<dbReference type="GO" id="GO:0004816">
    <property type="term" value="F:asparagine-tRNA ligase activity"/>
    <property type="evidence" value="ECO:0007669"/>
    <property type="project" value="UniProtKB-UniRule"/>
</dbReference>
<dbReference type="GO" id="GO:0005524">
    <property type="term" value="F:ATP binding"/>
    <property type="evidence" value="ECO:0007669"/>
    <property type="project" value="UniProtKB-UniRule"/>
</dbReference>
<dbReference type="GO" id="GO:0003676">
    <property type="term" value="F:nucleic acid binding"/>
    <property type="evidence" value="ECO:0007669"/>
    <property type="project" value="InterPro"/>
</dbReference>
<dbReference type="GO" id="GO:0006421">
    <property type="term" value="P:asparaginyl-tRNA aminoacylation"/>
    <property type="evidence" value="ECO:0007669"/>
    <property type="project" value="UniProtKB-UniRule"/>
</dbReference>
<dbReference type="CDD" id="cd00776">
    <property type="entry name" value="AsxRS_core"/>
    <property type="match status" value="1"/>
</dbReference>
<dbReference type="CDD" id="cd04318">
    <property type="entry name" value="EcAsnRS_like_N"/>
    <property type="match status" value="1"/>
</dbReference>
<dbReference type="FunFam" id="3.30.930.10:FF:000016">
    <property type="entry name" value="Asparagine--tRNA ligase"/>
    <property type="match status" value="1"/>
</dbReference>
<dbReference type="Gene3D" id="3.30.930.10">
    <property type="entry name" value="Bira Bifunctional Protein, Domain 2"/>
    <property type="match status" value="1"/>
</dbReference>
<dbReference type="Gene3D" id="2.40.50.140">
    <property type="entry name" value="Nucleic acid-binding proteins"/>
    <property type="match status" value="1"/>
</dbReference>
<dbReference type="HAMAP" id="MF_00534">
    <property type="entry name" value="Asn_tRNA_synth"/>
    <property type="match status" value="1"/>
</dbReference>
<dbReference type="InterPro" id="IPR004364">
    <property type="entry name" value="Aa-tRNA-synt_II"/>
</dbReference>
<dbReference type="InterPro" id="IPR006195">
    <property type="entry name" value="aa-tRNA-synth_II"/>
</dbReference>
<dbReference type="InterPro" id="IPR045864">
    <property type="entry name" value="aa-tRNA-synth_II/BPL/LPL"/>
</dbReference>
<dbReference type="InterPro" id="IPR004522">
    <property type="entry name" value="Asn-tRNA-ligase"/>
</dbReference>
<dbReference type="InterPro" id="IPR002312">
    <property type="entry name" value="Asp/Asn-tRNA-synth_IIb"/>
</dbReference>
<dbReference type="InterPro" id="IPR012340">
    <property type="entry name" value="NA-bd_OB-fold"/>
</dbReference>
<dbReference type="InterPro" id="IPR004365">
    <property type="entry name" value="NA-bd_OB_tRNA"/>
</dbReference>
<dbReference type="NCBIfam" id="TIGR00457">
    <property type="entry name" value="asnS"/>
    <property type="match status" value="1"/>
</dbReference>
<dbReference type="NCBIfam" id="NF003037">
    <property type="entry name" value="PRK03932.1"/>
    <property type="match status" value="1"/>
</dbReference>
<dbReference type="PANTHER" id="PTHR22594:SF34">
    <property type="entry name" value="ASPARAGINE--TRNA LIGASE, MITOCHONDRIAL-RELATED"/>
    <property type="match status" value="1"/>
</dbReference>
<dbReference type="PANTHER" id="PTHR22594">
    <property type="entry name" value="ASPARTYL/LYSYL-TRNA SYNTHETASE"/>
    <property type="match status" value="1"/>
</dbReference>
<dbReference type="Pfam" id="PF00152">
    <property type="entry name" value="tRNA-synt_2"/>
    <property type="match status" value="1"/>
</dbReference>
<dbReference type="Pfam" id="PF01336">
    <property type="entry name" value="tRNA_anti-codon"/>
    <property type="match status" value="1"/>
</dbReference>
<dbReference type="PRINTS" id="PR01042">
    <property type="entry name" value="TRNASYNTHASP"/>
</dbReference>
<dbReference type="SUPFAM" id="SSF55681">
    <property type="entry name" value="Class II aaRS and biotin synthetases"/>
    <property type="match status" value="1"/>
</dbReference>
<dbReference type="SUPFAM" id="SSF50249">
    <property type="entry name" value="Nucleic acid-binding proteins"/>
    <property type="match status" value="1"/>
</dbReference>
<dbReference type="PROSITE" id="PS50862">
    <property type="entry name" value="AA_TRNA_LIGASE_II"/>
    <property type="match status" value="1"/>
</dbReference>
<evidence type="ECO:0000255" key="1">
    <source>
        <dbReference type="HAMAP-Rule" id="MF_00534"/>
    </source>
</evidence>
<proteinExistence type="inferred from homology"/>
<feature type="chain" id="PRO_1000128212" description="Asparagine--tRNA ligase">
    <location>
        <begin position="1"/>
        <end position="450"/>
    </location>
</feature>
<sequence>MTATIKTLYRKLKHLKNSQEFEVNGWVVSSRGNDKIRFVTLNDGSSVENLQLVLKEDEIKKVNVDHLSLGAAVYAKGVLILTPEAKQPFELVVSELEIIGKVDNNFPIQKKETSLDFLREIPHLRHRTNLFRAIMIIRATLAYEIHQFFNKNDFINISVPIITSNDGEGAGETLLVDDESKDYFFKQKAFLGVTGQLHAEAYAAGFKNVYTFAPTFRAENSHTSRHLAEFWMIEPEMAFATLKDDIKIADSMLKTVIKNTIEKCPDEMKLLDFLKDNTLLPTLNEFIHKKITVLDYKVAVKKLLEHKYRFEEKNIYFGMDLASEHEKFISESIVKGPVAIINYPKDIKAFYMYQNADNKTVACFDLLVPGIGELIGGSQRESRYEKLVTRMAELNIPQEPLQWYLDLRKYGYAPSSGFGLGFERLVMYVTGISNIRDVIPFPRVAGTIKM</sequence>
<comment type="catalytic activity">
    <reaction evidence="1">
        <text>tRNA(Asn) + L-asparagine + ATP = L-asparaginyl-tRNA(Asn) + AMP + diphosphate + H(+)</text>
        <dbReference type="Rhea" id="RHEA:11180"/>
        <dbReference type="Rhea" id="RHEA-COMP:9659"/>
        <dbReference type="Rhea" id="RHEA-COMP:9674"/>
        <dbReference type="ChEBI" id="CHEBI:15378"/>
        <dbReference type="ChEBI" id="CHEBI:30616"/>
        <dbReference type="ChEBI" id="CHEBI:33019"/>
        <dbReference type="ChEBI" id="CHEBI:58048"/>
        <dbReference type="ChEBI" id="CHEBI:78442"/>
        <dbReference type="ChEBI" id="CHEBI:78515"/>
        <dbReference type="ChEBI" id="CHEBI:456215"/>
        <dbReference type="EC" id="6.1.1.22"/>
    </reaction>
</comment>
<comment type="subunit">
    <text evidence="1">Homodimer.</text>
</comment>
<comment type="subcellular location">
    <subcellularLocation>
        <location evidence="1">Cytoplasm</location>
    </subcellularLocation>
</comment>
<comment type="similarity">
    <text evidence="1">Belongs to the class-II aminoacyl-tRNA synthetase family.</text>
</comment>
<gene>
    <name evidence="1" type="primary">asnS</name>
    <name type="ordered locus">MARTH_orf850</name>
</gene>
<organism>
    <name type="scientific">Metamycoplasma arthritidis (strain 158L3-1)</name>
    <name type="common">Mycoplasma arthritidis</name>
    <dbReference type="NCBI Taxonomy" id="243272"/>
    <lineage>
        <taxon>Bacteria</taxon>
        <taxon>Bacillati</taxon>
        <taxon>Mycoplasmatota</taxon>
        <taxon>Mycoplasmoidales</taxon>
        <taxon>Metamycoplasmataceae</taxon>
        <taxon>Metamycoplasma</taxon>
    </lineage>
</organism>
<accession>B3PNG8</accession>
<name>SYN_META1</name>
<keyword id="KW-0030">Aminoacyl-tRNA synthetase</keyword>
<keyword id="KW-0067">ATP-binding</keyword>
<keyword id="KW-0963">Cytoplasm</keyword>
<keyword id="KW-0436">Ligase</keyword>
<keyword id="KW-0547">Nucleotide-binding</keyword>
<keyword id="KW-0648">Protein biosynthesis</keyword>
<keyword id="KW-1185">Reference proteome</keyword>
<protein>
    <recommendedName>
        <fullName evidence="1">Asparagine--tRNA ligase</fullName>
        <ecNumber evidence="1">6.1.1.22</ecNumber>
    </recommendedName>
    <alternativeName>
        <fullName evidence="1">Asparaginyl-tRNA synthetase</fullName>
        <shortName evidence="1">AsnRS</shortName>
    </alternativeName>
</protein>